<proteinExistence type="predicted"/>
<reference key="1">
    <citation type="journal article" date="2002" name="Nature">
        <title>Sequence and analysis of chromosome 2 of Dictyostelium discoideum.</title>
        <authorList>
            <person name="Gloeckner G."/>
            <person name="Eichinger L."/>
            <person name="Szafranski K."/>
            <person name="Pachebat J.A."/>
            <person name="Bankier A.T."/>
            <person name="Dear P.H."/>
            <person name="Lehmann R."/>
            <person name="Baumgart C."/>
            <person name="Parra G."/>
            <person name="Abril J.F."/>
            <person name="Guigo R."/>
            <person name="Kumpf K."/>
            <person name="Tunggal B."/>
            <person name="Cox E.C."/>
            <person name="Quail M.A."/>
            <person name="Platzer M."/>
            <person name="Rosenthal A."/>
            <person name="Noegel A.A."/>
        </authorList>
    </citation>
    <scope>NUCLEOTIDE SEQUENCE [LARGE SCALE GENOMIC DNA]</scope>
    <source>
        <strain>AX4</strain>
    </source>
</reference>
<reference key="2">
    <citation type="journal article" date="2005" name="Nature">
        <title>The genome of the social amoeba Dictyostelium discoideum.</title>
        <authorList>
            <person name="Eichinger L."/>
            <person name="Pachebat J.A."/>
            <person name="Gloeckner G."/>
            <person name="Rajandream M.A."/>
            <person name="Sucgang R."/>
            <person name="Berriman M."/>
            <person name="Song J."/>
            <person name="Olsen R."/>
            <person name="Szafranski K."/>
            <person name="Xu Q."/>
            <person name="Tunggal B."/>
            <person name="Kummerfeld S."/>
            <person name="Madera M."/>
            <person name="Konfortov B.A."/>
            <person name="Rivero F."/>
            <person name="Bankier A.T."/>
            <person name="Lehmann R."/>
            <person name="Hamlin N."/>
            <person name="Davies R."/>
            <person name="Gaudet P."/>
            <person name="Fey P."/>
            <person name="Pilcher K."/>
            <person name="Chen G."/>
            <person name="Saunders D."/>
            <person name="Sodergren E.J."/>
            <person name="Davis P."/>
            <person name="Kerhornou A."/>
            <person name="Nie X."/>
            <person name="Hall N."/>
            <person name="Anjard C."/>
            <person name="Hemphill L."/>
            <person name="Bason N."/>
            <person name="Farbrother P."/>
            <person name="Desany B."/>
            <person name="Just E."/>
            <person name="Morio T."/>
            <person name="Rost R."/>
            <person name="Churcher C.M."/>
            <person name="Cooper J."/>
            <person name="Haydock S."/>
            <person name="van Driessche N."/>
            <person name="Cronin A."/>
            <person name="Goodhead I."/>
            <person name="Muzny D.M."/>
            <person name="Mourier T."/>
            <person name="Pain A."/>
            <person name="Lu M."/>
            <person name="Harper D."/>
            <person name="Lindsay R."/>
            <person name="Hauser H."/>
            <person name="James K.D."/>
            <person name="Quiles M."/>
            <person name="Madan Babu M."/>
            <person name="Saito T."/>
            <person name="Buchrieser C."/>
            <person name="Wardroper A."/>
            <person name="Felder M."/>
            <person name="Thangavelu M."/>
            <person name="Johnson D."/>
            <person name="Knights A."/>
            <person name="Loulseged H."/>
            <person name="Mungall K.L."/>
            <person name="Oliver K."/>
            <person name="Price C."/>
            <person name="Quail M.A."/>
            <person name="Urushihara H."/>
            <person name="Hernandez J."/>
            <person name="Rabbinowitsch E."/>
            <person name="Steffen D."/>
            <person name="Sanders M."/>
            <person name="Ma J."/>
            <person name="Kohara Y."/>
            <person name="Sharp S."/>
            <person name="Simmonds M.N."/>
            <person name="Spiegler S."/>
            <person name="Tivey A."/>
            <person name="Sugano S."/>
            <person name="White B."/>
            <person name="Walker D."/>
            <person name="Woodward J.R."/>
            <person name="Winckler T."/>
            <person name="Tanaka Y."/>
            <person name="Shaulsky G."/>
            <person name="Schleicher M."/>
            <person name="Weinstock G.M."/>
            <person name="Rosenthal A."/>
            <person name="Cox E.C."/>
            <person name="Chisholm R.L."/>
            <person name="Gibbs R.A."/>
            <person name="Loomis W.F."/>
            <person name="Platzer M."/>
            <person name="Kay R.R."/>
            <person name="Williams J.G."/>
            <person name="Dear P.H."/>
            <person name="Noegel A.A."/>
            <person name="Barrell B.G."/>
            <person name="Kuspa A."/>
        </authorList>
    </citation>
    <scope>NUCLEOTIDE SEQUENCE [LARGE SCALE GENOMIC DNA]</scope>
    <source>
        <strain>AX4</strain>
    </source>
</reference>
<gene>
    <name type="primary">gtaH</name>
    <name type="ORF">DDB_G0277591</name>
</gene>
<dbReference type="EMBL" id="AAFI02000020">
    <property type="protein sequence ID" value="EAL68613.1"/>
    <property type="molecule type" value="Genomic_DNA"/>
</dbReference>
<dbReference type="RefSeq" id="XP_642534.1">
    <property type="nucleotide sequence ID" value="XM_637442.1"/>
</dbReference>
<dbReference type="SMR" id="Q75JZ0"/>
<dbReference type="PaxDb" id="44689-DDB0216327"/>
<dbReference type="EnsemblProtists" id="EAL68613">
    <property type="protein sequence ID" value="EAL68613"/>
    <property type="gene ID" value="DDB_G0277591"/>
</dbReference>
<dbReference type="GeneID" id="8621096"/>
<dbReference type="KEGG" id="ddi:DDB_G0277591"/>
<dbReference type="dictyBase" id="DDB_G0277591">
    <property type="gene designation" value="gtaH"/>
</dbReference>
<dbReference type="VEuPathDB" id="AmoebaDB:DDB_G0277591"/>
<dbReference type="eggNOG" id="KOG1601">
    <property type="taxonomic scope" value="Eukaryota"/>
</dbReference>
<dbReference type="HOGENOM" id="CLU_525242_0_0_1"/>
<dbReference type="InParanoid" id="Q75JZ0"/>
<dbReference type="OMA" id="NDIRCEK"/>
<dbReference type="PRO" id="PR:Q75JZ0"/>
<dbReference type="Proteomes" id="UP000002195">
    <property type="component" value="Chromosome 2"/>
</dbReference>
<dbReference type="GO" id="GO:0005634">
    <property type="term" value="C:nucleus"/>
    <property type="evidence" value="ECO:0000318"/>
    <property type="project" value="GO_Central"/>
</dbReference>
<dbReference type="GO" id="GO:0000976">
    <property type="term" value="F:transcription cis-regulatory region binding"/>
    <property type="evidence" value="ECO:0000318"/>
    <property type="project" value="GO_Central"/>
</dbReference>
<dbReference type="GO" id="GO:0008270">
    <property type="term" value="F:zinc ion binding"/>
    <property type="evidence" value="ECO:0007669"/>
    <property type="project" value="UniProtKB-KW"/>
</dbReference>
<dbReference type="GO" id="GO:0006357">
    <property type="term" value="P:regulation of transcription by RNA polymerase II"/>
    <property type="evidence" value="ECO:0000318"/>
    <property type="project" value="GO_Central"/>
</dbReference>
<dbReference type="CDD" id="cd00202">
    <property type="entry name" value="ZnF_GATA"/>
    <property type="match status" value="1"/>
</dbReference>
<dbReference type="Gene3D" id="3.30.50.10">
    <property type="entry name" value="Erythroid Transcription Factor GATA-1, subunit A"/>
    <property type="match status" value="1"/>
</dbReference>
<dbReference type="InterPro" id="IPR052138">
    <property type="entry name" value="GATA_ZnFinger_Domain"/>
</dbReference>
<dbReference type="InterPro" id="IPR000679">
    <property type="entry name" value="Znf_GATA"/>
</dbReference>
<dbReference type="InterPro" id="IPR013088">
    <property type="entry name" value="Znf_NHR/GATA"/>
</dbReference>
<dbReference type="PANTHER" id="PTHR47255">
    <property type="entry name" value="GATA TRANSCRIPTION FACTOR 22-RELATED"/>
    <property type="match status" value="1"/>
</dbReference>
<dbReference type="PANTHER" id="PTHR47255:SF4">
    <property type="entry name" value="GATA ZINC FINGER DOMAIN-CONTAINING PROTEIN 12"/>
    <property type="match status" value="1"/>
</dbReference>
<dbReference type="Pfam" id="PF00320">
    <property type="entry name" value="GATA"/>
    <property type="match status" value="1"/>
</dbReference>
<dbReference type="SMART" id="SM00401">
    <property type="entry name" value="ZnF_GATA"/>
    <property type="match status" value="1"/>
</dbReference>
<dbReference type="SUPFAM" id="SSF57716">
    <property type="entry name" value="Glucocorticoid receptor-like (DNA-binding domain)"/>
    <property type="match status" value="1"/>
</dbReference>
<dbReference type="PROSITE" id="PS00344">
    <property type="entry name" value="GATA_ZN_FINGER_1"/>
    <property type="match status" value="1"/>
</dbReference>
<dbReference type="PROSITE" id="PS50114">
    <property type="entry name" value="GATA_ZN_FINGER_2"/>
    <property type="match status" value="1"/>
</dbReference>
<protein>
    <recommendedName>
        <fullName>GATA zinc finger domain-containing protein 8</fullName>
    </recommendedName>
</protein>
<accession>Q75JZ0</accession>
<accession>Q54ZG3</accession>
<sequence>MLLKEIIREELEEDYYNYYNNLGEYSTGKGDDIKEITNNSQNKTNNNNNITILTSYNYNNNNNNNNNNNNNNNNNNNNNNNNNNNNNNNNNNNNNLFVSHSSILRSSSSPSSSESDEYSNGNNNNNSIINDLSSSSSSSSSSSSSSSSSITSPSSNHAYSPYNRSHKGIKISPNNKQVSSSGLLGSTMVSTSLIMGASNINNNNNNNNNNNNNNNNNNNNNNNNNNNNNNINIINNSNTNNNSSNSNNTINTFNFNNNLNNLNSINNNLNNYSNNMNINNQHNHQFNHYNNNNNNNNNNNNNNSDNNNIHFSNNGNMNIYNPNLSNFNNNNNNNNNNNNNNNNNNNNSNINNNNNNNKQIGNIVAKDDAEQLKESWKKIKEISNEFIKLSKLATKSDLQSIDLIPELRSKVMDLNNFLHVIEEKGELLKTDERQQKKRMESDKNAEKREKRREASRLLNNVCRNCKTTETPEWRKGPDGTKSLCNACGLHYAKNVKREAAGLHHLNEVGKKVDLTSILN</sequence>
<feature type="chain" id="PRO_0000330441" description="GATA zinc finger domain-containing protein 8">
    <location>
        <begin position="1"/>
        <end position="519"/>
    </location>
</feature>
<feature type="zinc finger region" description="GATA-type" evidence="2">
    <location>
        <begin position="462"/>
        <end position="487"/>
    </location>
</feature>
<feature type="region of interest" description="Disordered" evidence="3">
    <location>
        <begin position="25"/>
        <end position="182"/>
    </location>
</feature>
<feature type="region of interest" description="Disordered" evidence="3">
    <location>
        <begin position="198"/>
        <end position="249"/>
    </location>
</feature>
<feature type="region of interest" description="Disordered" evidence="3">
    <location>
        <begin position="273"/>
        <end position="359"/>
    </location>
</feature>
<feature type="region of interest" description="Disordered" evidence="3">
    <location>
        <begin position="431"/>
        <end position="453"/>
    </location>
</feature>
<feature type="coiled-coil region" evidence="1">
    <location>
        <begin position="429"/>
        <end position="461"/>
    </location>
</feature>
<feature type="compositionally biased region" description="Low complexity" evidence="3">
    <location>
        <begin position="37"/>
        <end position="156"/>
    </location>
</feature>
<feature type="compositionally biased region" description="Polar residues" evidence="3">
    <location>
        <begin position="172"/>
        <end position="182"/>
    </location>
</feature>
<feature type="compositionally biased region" description="Low complexity" evidence="3">
    <location>
        <begin position="273"/>
        <end position="357"/>
    </location>
</feature>
<keyword id="KW-0175">Coiled coil</keyword>
<keyword id="KW-0479">Metal-binding</keyword>
<keyword id="KW-1185">Reference proteome</keyword>
<keyword id="KW-0862">Zinc</keyword>
<keyword id="KW-0863">Zinc-finger</keyword>
<name>GTAH_DICDI</name>
<organism>
    <name type="scientific">Dictyostelium discoideum</name>
    <name type="common">Social amoeba</name>
    <dbReference type="NCBI Taxonomy" id="44689"/>
    <lineage>
        <taxon>Eukaryota</taxon>
        <taxon>Amoebozoa</taxon>
        <taxon>Evosea</taxon>
        <taxon>Eumycetozoa</taxon>
        <taxon>Dictyostelia</taxon>
        <taxon>Dictyosteliales</taxon>
        <taxon>Dictyosteliaceae</taxon>
        <taxon>Dictyostelium</taxon>
    </lineage>
</organism>
<evidence type="ECO:0000255" key="1"/>
<evidence type="ECO:0000255" key="2">
    <source>
        <dbReference type="PROSITE-ProRule" id="PRU00094"/>
    </source>
</evidence>
<evidence type="ECO:0000256" key="3">
    <source>
        <dbReference type="SAM" id="MobiDB-lite"/>
    </source>
</evidence>